<comment type="function">
    <text>Required for meiotic recombination events; not required for mitosis.</text>
</comment>
<comment type="subcellular location">
    <subcellularLocation>
        <location evidence="1">Chromosome</location>
    </subcellularLocation>
</comment>
<comment type="developmental stage">
    <text>Meiosis-specific.</text>
</comment>
<comment type="similarity">
    <text evidence="3">Belongs to the REC114 family.</text>
</comment>
<feature type="chain" id="PRO_0000097217" description="Meiotic recombination protein REC114">
    <location>
        <begin position="1"/>
        <end position="432"/>
    </location>
</feature>
<feature type="region of interest" description="Disordered" evidence="2">
    <location>
        <begin position="333"/>
        <end position="373"/>
    </location>
</feature>
<feature type="compositionally biased region" description="Basic and acidic residues" evidence="2">
    <location>
        <begin position="343"/>
        <end position="354"/>
    </location>
</feature>
<protein>
    <recommendedName>
        <fullName>Meiotic recombination protein REC114</fullName>
    </recommendedName>
</protein>
<proteinExistence type="evidence at transcript level"/>
<sequence length="432" mass="48922">MYEYCSVVIKKYSKYTIPSFAPNGFCSMLEPPQIDKWQHLSTNCTLQFRVLLMDSGQVLIHVVLNNSTLLENIRLPLGDNQDLIQFSCKCPIISCKYISEEFGPRMLRRFQINLPNDIEFNRAIVSLKNLNFVLRTAKTSIAQNTITSQVLDINNGKKVNFAEGTNTSNYAHSNTQFQTQNMITDFSQRCQEKSEREPSNRSNITLPQDNFPIGQQSWPNTELNVVHSSQDLNTPSATQTVLSRPEPLNVQPSEVSQSLAKTTSCLPNIGNQKNQTETISDLLSRKDIAPCKPGLMEVVHLPKERVEKESRMHSTTGLVKTPTTTVWSLEKENTIRQNSNNKENADNKLSDSQKSRGINTPNRRTEIPLNGTLNGTKEEVSLGGEITVSVKNANRNASRKISKRLIKEKLKDKEFMNWVNKVETVLNKMFEK</sequence>
<keyword id="KW-0158">Chromosome</keyword>
<keyword id="KW-0469">Meiosis</keyword>
<name>RE114_SACPA</name>
<organism>
    <name type="scientific">Saccharomyces paradoxus</name>
    <name type="common">Yeast</name>
    <name type="synonym">Saccharomyces douglasii</name>
    <dbReference type="NCBI Taxonomy" id="27291"/>
    <lineage>
        <taxon>Eukaryota</taxon>
        <taxon>Fungi</taxon>
        <taxon>Dikarya</taxon>
        <taxon>Ascomycota</taxon>
        <taxon>Saccharomycotina</taxon>
        <taxon>Saccharomycetes</taxon>
        <taxon>Saccharomycetales</taxon>
        <taxon>Saccharomycetaceae</taxon>
        <taxon>Saccharomyces</taxon>
    </lineage>
</organism>
<accession>P78956</accession>
<evidence type="ECO:0000250" key="1">
    <source>
        <dbReference type="UniProtKB" id="Q9CWH4"/>
    </source>
</evidence>
<evidence type="ECO:0000256" key="2">
    <source>
        <dbReference type="SAM" id="MobiDB-lite"/>
    </source>
</evidence>
<evidence type="ECO:0000305" key="3"/>
<gene>
    <name type="primary">REC114</name>
</gene>
<reference key="1">
    <citation type="journal article" date="1997" name="Mol. Gen. Genet.">
        <title>Examination of the intron in the meiosis-specific recombination gene REC114 in Saccharomyces.</title>
        <authorList>
            <person name="Malone R.E."/>
            <person name="Pittman D.L."/>
            <person name="Nau J.J."/>
        </authorList>
    </citation>
    <scope>NUCLEOTIDE SEQUENCE [GENOMIC DNA]</scope>
    <source>
        <strain>DBVPG 6466 / CBS 5829</strain>
    </source>
</reference>
<dbReference type="EMBL" id="Y08767">
    <property type="protein sequence ID" value="CAA70020.1"/>
    <property type="molecule type" value="Genomic_DNA"/>
</dbReference>
<dbReference type="SMR" id="P78956"/>
<dbReference type="VEuPathDB" id="FungiDB:SPAR_M02490"/>
<dbReference type="GO" id="GO:0005694">
    <property type="term" value="C:chromosome"/>
    <property type="evidence" value="ECO:0000250"/>
    <property type="project" value="UniProtKB"/>
</dbReference>
<dbReference type="GO" id="GO:0007131">
    <property type="term" value="P:reciprocal meiotic recombination"/>
    <property type="evidence" value="ECO:0007669"/>
    <property type="project" value="InterPro"/>
</dbReference>
<dbReference type="InterPro" id="IPR004354">
    <property type="entry name" value="Meiotic_Rec114"/>
</dbReference>
<dbReference type="Pfam" id="PF03525">
    <property type="entry name" value="Meiotic_rec114"/>
    <property type="match status" value="1"/>
</dbReference>
<dbReference type="PRINTS" id="PR01548">
    <property type="entry name" value="MEIOTICR114"/>
</dbReference>